<keyword id="KW-0050">Antiport</keyword>
<keyword id="KW-1003">Cell membrane</keyword>
<keyword id="KW-0375">Hydrogen ion transport</keyword>
<keyword id="KW-0406">Ion transport</keyword>
<keyword id="KW-0472">Membrane</keyword>
<keyword id="KW-0915">Sodium</keyword>
<keyword id="KW-0739">Sodium transport</keyword>
<keyword id="KW-0812">Transmembrane</keyword>
<keyword id="KW-1133">Transmembrane helix</keyword>
<keyword id="KW-0813">Transport</keyword>
<reference key="1">
    <citation type="submission" date="2007-06" db="EMBL/GenBank/DDBJ databases">
        <title>Complete sequence of chromosome of Staphylococcus aureus subsp. aureus JH1.</title>
        <authorList>
            <consortium name="US DOE Joint Genome Institute"/>
            <person name="Copeland A."/>
            <person name="Lucas S."/>
            <person name="Lapidus A."/>
            <person name="Barry K."/>
            <person name="Detter J.C."/>
            <person name="Glavina del Rio T."/>
            <person name="Hammon N."/>
            <person name="Israni S."/>
            <person name="Dalin E."/>
            <person name="Tice H."/>
            <person name="Pitluck S."/>
            <person name="Chain P."/>
            <person name="Malfatti S."/>
            <person name="Shin M."/>
            <person name="Vergez L."/>
            <person name="Schmutz J."/>
            <person name="Larimer F."/>
            <person name="Land M."/>
            <person name="Hauser L."/>
            <person name="Kyrpides N."/>
            <person name="Ivanova N."/>
            <person name="Tomasz A."/>
            <person name="Richardson P."/>
        </authorList>
    </citation>
    <scope>NUCLEOTIDE SEQUENCE [LARGE SCALE GENOMIC DNA]</scope>
    <source>
        <strain>JH1</strain>
    </source>
</reference>
<accession>A6U054</accession>
<sequence>MNHNVIIVIALIIVVISMLAMLIRVVLGPSLADRVVALDAIGLQLMAVIALFSILLNIKYMIVVIMMIGILAFLGTAVFSKFMDKGKVIEHDQNHTD</sequence>
<name>MNHF1_STAA2</name>
<gene>
    <name type="primary">mnhF1</name>
    <name type="ordered locus">SaurJH1_0966</name>
</gene>
<protein>
    <recommendedName>
        <fullName>Na(+)/H(+) antiporter subunit F1</fullName>
    </recommendedName>
    <alternativeName>
        <fullName>Mnh complex subunit F1</fullName>
    </alternativeName>
</protein>
<dbReference type="EMBL" id="CP000736">
    <property type="protein sequence ID" value="ABR51822.1"/>
    <property type="molecule type" value="Genomic_DNA"/>
</dbReference>
<dbReference type="SMR" id="A6U054"/>
<dbReference type="KEGG" id="sah:SaurJH1_0966"/>
<dbReference type="HOGENOM" id="CLU_125825_1_3_9"/>
<dbReference type="GO" id="GO:0005886">
    <property type="term" value="C:plasma membrane"/>
    <property type="evidence" value="ECO:0007669"/>
    <property type="project" value="UniProtKB-SubCell"/>
</dbReference>
<dbReference type="GO" id="GO:0015385">
    <property type="term" value="F:sodium:proton antiporter activity"/>
    <property type="evidence" value="ECO:0007669"/>
    <property type="project" value="TreeGrafter"/>
</dbReference>
<dbReference type="InterPro" id="IPR007208">
    <property type="entry name" value="MrpF/PhaF-like"/>
</dbReference>
<dbReference type="NCBIfam" id="NF009248">
    <property type="entry name" value="PRK12600.1"/>
    <property type="match status" value="1"/>
</dbReference>
<dbReference type="PANTHER" id="PTHR34702">
    <property type="entry name" value="NA(+)/H(+) ANTIPORTER SUBUNIT F1"/>
    <property type="match status" value="1"/>
</dbReference>
<dbReference type="PANTHER" id="PTHR34702:SF1">
    <property type="entry name" value="NA(+)_H(+) ANTIPORTER SUBUNIT F"/>
    <property type="match status" value="1"/>
</dbReference>
<dbReference type="Pfam" id="PF04066">
    <property type="entry name" value="MrpF_PhaF"/>
    <property type="match status" value="1"/>
</dbReference>
<dbReference type="PIRSF" id="PIRSF028784">
    <property type="entry name" value="MrpF"/>
    <property type="match status" value="1"/>
</dbReference>
<comment type="function">
    <text evidence="1">Mnh complex is a Na(+)/H(+) antiporter involved in Na(+) excretion.</text>
</comment>
<comment type="subunit">
    <text evidence="1">May form a heterooligomeric complex that consists of seven subunits: mnhA1, mnhB1, mnhC1, mnhD1, mnhE1, mnhF1 and mnhG1.</text>
</comment>
<comment type="subcellular location">
    <subcellularLocation>
        <location evidence="3">Cell membrane</location>
        <topology evidence="3">Multi-pass membrane protein</topology>
    </subcellularLocation>
</comment>
<comment type="similarity">
    <text evidence="3">Belongs to the CPA3 antiporters (TC 2.A.63) subunit F family.</text>
</comment>
<evidence type="ECO:0000250" key="1"/>
<evidence type="ECO:0000255" key="2"/>
<evidence type="ECO:0000305" key="3"/>
<proteinExistence type="inferred from homology"/>
<organism>
    <name type="scientific">Staphylococcus aureus (strain JH1)</name>
    <dbReference type="NCBI Taxonomy" id="359787"/>
    <lineage>
        <taxon>Bacteria</taxon>
        <taxon>Bacillati</taxon>
        <taxon>Bacillota</taxon>
        <taxon>Bacilli</taxon>
        <taxon>Bacillales</taxon>
        <taxon>Staphylococcaceae</taxon>
        <taxon>Staphylococcus</taxon>
    </lineage>
</organism>
<feature type="chain" id="PRO_5000256967" description="Na(+)/H(+) antiporter subunit F1">
    <location>
        <begin position="1"/>
        <end position="97"/>
    </location>
</feature>
<feature type="transmembrane region" description="Helical" evidence="2">
    <location>
        <begin position="3"/>
        <end position="23"/>
    </location>
</feature>
<feature type="transmembrane region" description="Helical" evidence="2">
    <location>
        <begin position="35"/>
        <end position="55"/>
    </location>
</feature>
<feature type="transmembrane region" description="Helical" evidence="2">
    <location>
        <begin position="60"/>
        <end position="80"/>
    </location>
</feature>